<organism>
    <name type="scientific">Escherichia coli O6:H1 (strain CFT073 / ATCC 700928 / UPEC)</name>
    <dbReference type="NCBI Taxonomy" id="199310"/>
    <lineage>
        <taxon>Bacteria</taxon>
        <taxon>Pseudomonadati</taxon>
        <taxon>Pseudomonadota</taxon>
        <taxon>Gammaproteobacteria</taxon>
        <taxon>Enterobacterales</taxon>
        <taxon>Enterobacteriaceae</taxon>
        <taxon>Escherichia</taxon>
    </lineage>
</organism>
<feature type="chain" id="PRO_0000118767" description="NADH-quinone oxidoreductase subunit B">
    <location>
        <begin position="1"/>
        <end position="220"/>
    </location>
</feature>
<feature type="binding site" evidence="1">
    <location>
        <position position="63"/>
    </location>
    <ligand>
        <name>[4Fe-4S] cluster</name>
        <dbReference type="ChEBI" id="CHEBI:49883"/>
    </ligand>
</feature>
<feature type="binding site" evidence="1">
    <location>
        <position position="64"/>
    </location>
    <ligand>
        <name>[4Fe-4S] cluster</name>
        <dbReference type="ChEBI" id="CHEBI:49883"/>
    </ligand>
</feature>
<feature type="binding site" evidence="1">
    <location>
        <position position="129"/>
    </location>
    <ligand>
        <name>[4Fe-4S] cluster</name>
        <dbReference type="ChEBI" id="CHEBI:49883"/>
    </ligand>
</feature>
<feature type="binding site" evidence="1">
    <location>
        <position position="158"/>
    </location>
    <ligand>
        <name>[4Fe-4S] cluster</name>
        <dbReference type="ChEBI" id="CHEBI:49883"/>
    </ligand>
</feature>
<comment type="function">
    <text evidence="1">NDH-1 shuttles electrons from NADH, via FMN and iron-sulfur (Fe-S) centers, to quinones in the respiratory chain. The immediate electron acceptor for the enzyme in this species is believed to be ubiquinone. Couples the redox reaction to proton translocation (for every two electrons transferred, four hydrogen ions are translocated across the cytoplasmic membrane), and thus conserves the redox energy in a proton gradient.</text>
</comment>
<comment type="catalytic activity">
    <reaction evidence="1">
        <text>a quinone + NADH + 5 H(+)(in) = a quinol + NAD(+) + 4 H(+)(out)</text>
        <dbReference type="Rhea" id="RHEA:57888"/>
        <dbReference type="ChEBI" id="CHEBI:15378"/>
        <dbReference type="ChEBI" id="CHEBI:24646"/>
        <dbReference type="ChEBI" id="CHEBI:57540"/>
        <dbReference type="ChEBI" id="CHEBI:57945"/>
        <dbReference type="ChEBI" id="CHEBI:132124"/>
    </reaction>
</comment>
<comment type="cofactor">
    <cofactor evidence="1">
        <name>[4Fe-4S] cluster</name>
        <dbReference type="ChEBI" id="CHEBI:49883"/>
    </cofactor>
    <text evidence="1">Binds 1 [4Fe-4S] cluster.</text>
</comment>
<comment type="subunit">
    <text evidence="1">NDH-1 is composed of 13 different subunits. Subunits NuoB, CD, E, F, and G constitute the peripheral sector of the complex.</text>
</comment>
<comment type="subcellular location">
    <subcellularLocation>
        <location evidence="1">Cell inner membrane</location>
        <topology evidence="1">Peripheral membrane protein</topology>
        <orientation evidence="1">Cytoplasmic side</orientation>
    </subcellularLocation>
</comment>
<comment type="similarity">
    <text evidence="1">Belongs to the complex I 20 kDa subunit family.</text>
</comment>
<evidence type="ECO:0000255" key="1">
    <source>
        <dbReference type="HAMAP-Rule" id="MF_01356"/>
    </source>
</evidence>
<gene>
    <name evidence="1" type="primary">nuoB</name>
    <name type="ordered locus">c2828</name>
</gene>
<sequence length="220" mass="25056">MDYTLTRIDPNGENDRYPLQKQEIVTDPLEQEVNKNVFMGKLNDMVNWGRKNSIWPYNFGLSCCYVEMVTSFTAVHDVARFGAEVLRASPRQADLMVVAGTCFTKMAPVIQRLYDQMLEPKWVISMGACANSGGMYDIYSVVQGVDKFIPVDVYIPGCPPRPEAYMQALMLLQESIGKERRPLSWVVGDQGVYRANMQSERERKRGERIAVTNLRTPDEI</sequence>
<proteinExistence type="inferred from homology"/>
<keyword id="KW-0004">4Fe-4S</keyword>
<keyword id="KW-0997">Cell inner membrane</keyword>
<keyword id="KW-1003">Cell membrane</keyword>
<keyword id="KW-0408">Iron</keyword>
<keyword id="KW-0411">Iron-sulfur</keyword>
<keyword id="KW-0472">Membrane</keyword>
<keyword id="KW-0479">Metal-binding</keyword>
<keyword id="KW-0520">NAD</keyword>
<keyword id="KW-0874">Quinone</keyword>
<keyword id="KW-1185">Reference proteome</keyword>
<keyword id="KW-1278">Translocase</keyword>
<keyword id="KW-0813">Transport</keyword>
<keyword id="KW-0830">Ubiquinone</keyword>
<name>NUOB_ECOL6</name>
<accession>P0AFC8</accession>
<accession>P33598</accession>
<accession>P78090</accession>
<accession>P78186</accession>
<accession>P78187</accession>
<reference key="1">
    <citation type="journal article" date="2002" name="Proc. Natl. Acad. Sci. U.S.A.">
        <title>Extensive mosaic structure revealed by the complete genome sequence of uropathogenic Escherichia coli.</title>
        <authorList>
            <person name="Welch R.A."/>
            <person name="Burland V."/>
            <person name="Plunkett G. III"/>
            <person name="Redford P."/>
            <person name="Roesch P."/>
            <person name="Rasko D."/>
            <person name="Buckles E.L."/>
            <person name="Liou S.-R."/>
            <person name="Boutin A."/>
            <person name="Hackett J."/>
            <person name="Stroud D."/>
            <person name="Mayhew G.F."/>
            <person name="Rose D.J."/>
            <person name="Zhou S."/>
            <person name="Schwartz D.C."/>
            <person name="Perna N.T."/>
            <person name="Mobley H.L.T."/>
            <person name="Donnenberg M.S."/>
            <person name="Blattner F.R."/>
        </authorList>
    </citation>
    <scope>NUCLEOTIDE SEQUENCE [LARGE SCALE GENOMIC DNA]</scope>
    <source>
        <strain>CFT073 / ATCC 700928 / UPEC</strain>
    </source>
</reference>
<dbReference type="EC" id="7.1.1.-" evidence="1"/>
<dbReference type="EMBL" id="AE014075">
    <property type="protein sequence ID" value="AAN81282.1"/>
    <property type="molecule type" value="Genomic_DNA"/>
</dbReference>
<dbReference type="RefSeq" id="WP_000386733.1">
    <property type="nucleotide sequence ID" value="NZ_CP051263.1"/>
</dbReference>
<dbReference type="SMR" id="P0AFC8"/>
<dbReference type="STRING" id="199310.c2828"/>
<dbReference type="GeneID" id="93774887"/>
<dbReference type="KEGG" id="ecc:c2828"/>
<dbReference type="eggNOG" id="COG0377">
    <property type="taxonomic scope" value="Bacteria"/>
</dbReference>
<dbReference type="HOGENOM" id="CLU_055737_7_3_6"/>
<dbReference type="BioCyc" id="ECOL199310:C2828-MONOMER"/>
<dbReference type="Proteomes" id="UP000001410">
    <property type="component" value="Chromosome"/>
</dbReference>
<dbReference type="GO" id="GO:0005886">
    <property type="term" value="C:plasma membrane"/>
    <property type="evidence" value="ECO:0007669"/>
    <property type="project" value="UniProtKB-SubCell"/>
</dbReference>
<dbReference type="GO" id="GO:0045271">
    <property type="term" value="C:respiratory chain complex I"/>
    <property type="evidence" value="ECO:0007669"/>
    <property type="project" value="TreeGrafter"/>
</dbReference>
<dbReference type="GO" id="GO:0051539">
    <property type="term" value="F:4 iron, 4 sulfur cluster binding"/>
    <property type="evidence" value="ECO:0007669"/>
    <property type="project" value="UniProtKB-KW"/>
</dbReference>
<dbReference type="GO" id="GO:0005506">
    <property type="term" value="F:iron ion binding"/>
    <property type="evidence" value="ECO:0007669"/>
    <property type="project" value="UniProtKB-UniRule"/>
</dbReference>
<dbReference type="GO" id="GO:0008137">
    <property type="term" value="F:NADH dehydrogenase (ubiquinone) activity"/>
    <property type="evidence" value="ECO:0007669"/>
    <property type="project" value="InterPro"/>
</dbReference>
<dbReference type="GO" id="GO:0050136">
    <property type="term" value="F:NADH:ubiquinone reductase (non-electrogenic) activity"/>
    <property type="evidence" value="ECO:0007669"/>
    <property type="project" value="UniProtKB-UniRule"/>
</dbReference>
<dbReference type="GO" id="GO:0048038">
    <property type="term" value="F:quinone binding"/>
    <property type="evidence" value="ECO:0007669"/>
    <property type="project" value="UniProtKB-KW"/>
</dbReference>
<dbReference type="GO" id="GO:0009060">
    <property type="term" value="P:aerobic respiration"/>
    <property type="evidence" value="ECO:0007669"/>
    <property type="project" value="TreeGrafter"/>
</dbReference>
<dbReference type="GO" id="GO:0015990">
    <property type="term" value="P:electron transport coupled proton transport"/>
    <property type="evidence" value="ECO:0007669"/>
    <property type="project" value="TreeGrafter"/>
</dbReference>
<dbReference type="FunFam" id="3.40.50.12280:FF:000002">
    <property type="entry name" value="NADH-quinone oxidoreductase subunit B"/>
    <property type="match status" value="1"/>
</dbReference>
<dbReference type="Gene3D" id="3.40.50.12280">
    <property type="match status" value="1"/>
</dbReference>
<dbReference type="HAMAP" id="MF_01356">
    <property type="entry name" value="NDH1_NuoB"/>
    <property type="match status" value="1"/>
</dbReference>
<dbReference type="InterPro" id="IPR006137">
    <property type="entry name" value="NADH_UbQ_OxRdtase-like_20kDa"/>
</dbReference>
<dbReference type="InterPro" id="IPR006138">
    <property type="entry name" value="NADH_UQ_OxRdtase_20Kd_su"/>
</dbReference>
<dbReference type="NCBIfam" id="TIGR01957">
    <property type="entry name" value="nuoB_fam"/>
    <property type="match status" value="1"/>
</dbReference>
<dbReference type="NCBIfam" id="NF005012">
    <property type="entry name" value="PRK06411.1"/>
    <property type="match status" value="1"/>
</dbReference>
<dbReference type="PANTHER" id="PTHR11995">
    <property type="entry name" value="NADH DEHYDROGENASE"/>
    <property type="match status" value="1"/>
</dbReference>
<dbReference type="PANTHER" id="PTHR11995:SF14">
    <property type="entry name" value="NADH DEHYDROGENASE [UBIQUINONE] IRON-SULFUR PROTEIN 7, MITOCHONDRIAL"/>
    <property type="match status" value="1"/>
</dbReference>
<dbReference type="Pfam" id="PF01058">
    <property type="entry name" value="Oxidored_q6"/>
    <property type="match status" value="1"/>
</dbReference>
<dbReference type="SUPFAM" id="SSF56770">
    <property type="entry name" value="HydA/Nqo6-like"/>
    <property type="match status" value="1"/>
</dbReference>
<dbReference type="PROSITE" id="PS01150">
    <property type="entry name" value="COMPLEX1_20K"/>
    <property type="match status" value="1"/>
</dbReference>
<protein>
    <recommendedName>
        <fullName evidence="1">NADH-quinone oxidoreductase subunit B</fullName>
        <ecNumber evidence="1">7.1.1.-</ecNumber>
    </recommendedName>
    <alternativeName>
        <fullName evidence="1">NADH dehydrogenase I subunit B</fullName>
    </alternativeName>
    <alternativeName>
        <fullName evidence="1">NDH-1 subunit B</fullName>
    </alternativeName>
    <alternativeName>
        <fullName>NUO2</fullName>
    </alternativeName>
</protein>